<gene>
    <name evidence="1" type="primary">prfC</name>
    <name type="ordered locus">PSEEN1047</name>
</gene>
<organism>
    <name type="scientific">Pseudomonas entomophila (strain L48)</name>
    <dbReference type="NCBI Taxonomy" id="384676"/>
    <lineage>
        <taxon>Bacteria</taxon>
        <taxon>Pseudomonadati</taxon>
        <taxon>Pseudomonadota</taxon>
        <taxon>Gammaproteobacteria</taxon>
        <taxon>Pseudomonadales</taxon>
        <taxon>Pseudomonadaceae</taxon>
        <taxon>Pseudomonas</taxon>
    </lineage>
</organism>
<feature type="chain" id="PRO_1000023669" description="Peptide chain release factor 3">
    <location>
        <begin position="1"/>
        <end position="527"/>
    </location>
</feature>
<feature type="domain" description="tr-type G">
    <location>
        <begin position="9"/>
        <end position="277"/>
    </location>
</feature>
<feature type="binding site" evidence="1">
    <location>
        <begin position="18"/>
        <end position="25"/>
    </location>
    <ligand>
        <name>GTP</name>
        <dbReference type="ChEBI" id="CHEBI:37565"/>
    </ligand>
</feature>
<feature type="binding site" evidence="1">
    <location>
        <begin position="86"/>
        <end position="90"/>
    </location>
    <ligand>
        <name>GTP</name>
        <dbReference type="ChEBI" id="CHEBI:37565"/>
    </ligand>
</feature>
<feature type="binding site" evidence="1">
    <location>
        <begin position="140"/>
        <end position="143"/>
    </location>
    <ligand>
        <name>GTP</name>
        <dbReference type="ChEBI" id="CHEBI:37565"/>
    </ligand>
</feature>
<reference key="1">
    <citation type="journal article" date="2006" name="Nat. Biotechnol.">
        <title>Complete genome sequence of the entomopathogenic and metabolically versatile soil bacterium Pseudomonas entomophila.</title>
        <authorList>
            <person name="Vodovar N."/>
            <person name="Vallenet D."/>
            <person name="Cruveiller S."/>
            <person name="Rouy Z."/>
            <person name="Barbe V."/>
            <person name="Acosta C."/>
            <person name="Cattolico L."/>
            <person name="Jubin C."/>
            <person name="Lajus A."/>
            <person name="Segurens B."/>
            <person name="Vacherie B."/>
            <person name="Wincker P."/>
            <person name="Weissenbach J."/>
            <person name="Lemaitre B."/>
            <person name="Medigue C."/>
            <person name="Boccard F."/>
        </authorList>
    </citation>
    <scope>NUCLEOTIDE SEQUENCE [LARGE SCALE GENOMIC DNA]</scope>
    <source>
        <strain>L48</strain>
    </source>
</reference>
<protein>
    <recommendedName>
        <fullName evidence="1">Peptide chain release factor 3</fullName>
        <shortName evidence="1">RF-3</shortName>
    </recommendedName>
</protein>
<dbReference type="EMBL" id="CT573326">
    <property type="protein sequence ID" value="CAK13948.1"/>
    <property type="molecule type" value="Genomic_DNA"/>
</dbReference>
<dbReference type="RefSeq" id="WP_011532371.1">
    <property type="nucleotide sequence ID" value="NC_008027.1"/>
</dbReference>
<dbReference type="SMR" id="Q1IEF7"/>
<dbReference type="STRING" id="384676.PSEEN1047"/>
<dbReference type="GeneID" id="32804339"/>
<dbReference type="KEGG" id="pen:PSEEN1047"/>
<dbReference type="eggNOG" id="COG4108">
    <property type="taxonomic scope" value="Bacteria"/>
</dbReference>
<dbReference type="HOGENOM" id="CLU_002794_2_1_6"/>
<dbReference type="OrthoDB" id="9801472at2"/>
<dbReference type="Proteomes" id="UP000000658">
    <property type="component" value="Chromosome"/>
</dbReference>
<dbReference type="GO" id="GO:0005829">
    <property type="term" value="C:cytosol"/>
    <property type="evidence" value="ECO:0007669"/>
    <property type="project" value="TreeGrafter"/>
</dbReference>
<dbReference type="GO" id="GO:0005525">
    <property type="term" value="F:GTP binding"/>
    <property type="evidence" value="ECO:0007669"/>
    <property type="project" value="UniProtKB-UniRule"/>
</dbReference>
<dbReference type="GO" id="GO:0003924">
    <property type="term" value="F:GTPase activity"/>
    <property type="evidence" value="ECO:0007669"/>
    <property type="project" value="InterPro"/>
</dbReference>
<dbReference type="GO" id="GO:0097216">
    <property type="term" value="F:guanosine tetraphosphate binding"/>
    <property type="evidence" value="ECO:0007669"/>
    <property type="project" value="UniProtKB-ARBA"/>
</dbReference>
<dbReference type="GO" id="GO:0016150">
    <property type="term" value="F:translation release factor activity, codon nonspecific"/>
    <property type="evidence" value="ECO:0007669"/>
    <property type="project" value="TreeGrafter"/>
</dbReference>
<dbReference type="GO" id="GO:0016149">
    <property type="term" value="F:translation release factor activity, codon specific"/>
    <property type="evidence" value="ECO:0007669"/>
    <property type="project" value="UniProtKB-UniRule"/>
</dbReference>
<dbReference type="GO" id="GO:0006449">
    <property type="term" value="P:regulation of translational termination"/>
    <property type="evidence" value="ECO:0007669"/>
    <property type="project" value="UniProtKB-UniRule"/>
</dbReference>
<dbReference type="CDD" id="cd04169">
    <property type="entry name" value="RF3"/>
    <property type="match status" value="1"/>
</dbReference>
<dbReference type="CDD" id="cd03689">
    <property type="entry name" value="RF3_II"/>
    <property type="match status" value="1"/>
</dbReference>
<dbReference type="CDD" id="cd16259">
    <property type="entry name" value="RF3_III"/>
    <property type="match status" value="1"/>
</dbReference>
<dbReference type="FunFam" id="2.40.30.10:FF:000040">
    <property type="entry name" value="Peptide chain release factor 3"/>
    <property type="match status" value="1"/>
</dbReference>
<dbReference type="FunFam" id="3.30.70.3280:FF:000001">
    <property type="entry name" value="Peptide chain release factor 3"/>
    <property type="match status" value="1"/>
</dbReference>
<dbReference type="FunFam" id="3.40.50.300:FF:000542">
    <property type="entry name" value="Peptide chain release factor 3"/>
    <property type="match status" value="1"/>
</dbReference>
<dbReference type="Gene3D" id="3.40.50.300">
    <property type="entry name" value="P-loop containing nucleotide triphosphate hydrolases"/>
    <property type="match status" value="2"/>
</dbReference>
<dbReference type="Gene3D" id="3.30.70.3280">
    <property type="entry name" value="Peptide chain release factor 3, domain III"/>
    <property type="match status" value="1"/>
</dbReference>
<dbReference type="HAMAP" id="MF_00072">
    <property type="entry name" value="Rel_fac_3"/>
    <property type="match status" value="1"/>
</dbReference>
<dbReference type="InterPro" id="IPR053905">
    <property type="entry name" value="EF-G-like_DII"/>
</dbReference>
<dbReference type="InterPro" id="IPR035647">
    <property type="entry name" value="EFG_III/V"/>
</dbReference>
<dbReference type="InterPro" id="IPR031157">
    <property type="entry name" value="G_TR_CS"/>
</dbReference>
<dbReference type="InterPro" id="IPR027417">
    <property type="entry name" value="P-loop_NTPase"/>
</dbReference>
<dbReference type="InterPro" id="IPR004548">
    <property type="entry name" value="PrfC"/>
</dbReference>
<dbReference type="InterPro" id="IPR032090">
    <property type="entry name" value="RF3_C"/>
</dbReference>
<dbReference type="InterPro" id="IPR038467">
    <property type="entry name" value="RF3_dom_3_sf"/>
</dbReference>
<dbReference type="InterPro" id="IPR041732">
    <property type="entry name" value="RF3_GTP-bd"/>
</dbReference>
<dbReference type="InterPro" id="IPR005225">
    <property type="entry name" value="Small_GTP-bd"/>
</dbReference>
<dbReference type="InterPro" id="IPR000795">
    <property type="entry name" value="T_Tr_GTP-bd_dom"/>
</dbReference>
<dbReference type="InterPro" id="IPR009000">
    <property type="entry name" value="Transl_B-barrel_sf"/>
</dbReference>
<dbReference type="NCBIfam" id="TIGR00503">
    <property type="entry name" value="prfC"/>
    <property type="match status" value="1"/>
</dbReference>
<dbReference type="NCBIfam" id="NF001964">
    <property type="entry name" value="PRK00741.1"/>
    <property type="match status" value="1"/>
</dbReference>
<dbReference type="NCBIfam" id="TIGR00231">
    <property type="entry name" value="small_GTP"/>
    <property type="match status" value="1"/>
</dbReference>
<dbReference type="PANTHER" id="PTHR43556">
    <property type="entry name" value="PEPTIDE CHAIN RELEASE FACTOR RF3"/>
    <property type="match status" value="1"/>
</dbReference>
<dbReference type="PANTHER" id="PTHR43556:SF2">
    <property type="entry name" value="PEPTIDE CHAIN RELEASE FACTOR RF3"/>
    <property type="match status" value="1"/>
</dbReference>
<dbReference type="Pfam" id="PF22042">
    <property type="entry name" value="EF-G_D2"/>
    <property type="match status" value="1"/>
</dbReference>
<dbReference type="Pfam" id="PF00009">
    <property type="entry name" value="GTP_EFTU"/>
    <property type="match status" value="1"/>
</dbReference>
<dbReference type="Pfam" id="PF16658">
    <property type="entry name" value="RF3_C"/>
    <property type="match status" value="1"/>
</dbReference>
<dbReference type="PRINTS" id="PR00315">
    <property type="entry name" value="ELONGATNFCT"/>
</dbReference>
<dbReference type="SUPFAM" id="SSF54980">
    <property type="entry name" value="EF-G C-terminal domain-like"/>
    <property type="match status" value="1"/>
</dbReference>
<dbReference type="SUPFAM" id="SSF52540">
    <property type="entry name" value="P-loop containing nucleoside triphosphate hydrolases"/>
    <property type="match status" value="1"/>
</dbReference>
<dbReference type="SUPFAM" id="SSF50447">
    <property type="entry name" value="Translation proteins"/>
    <property type="match status" value="1"/>
</dbReference>
<dbReference type="PROSITE" id="PS00301">
    <property type="entry name" value="G_TR_1"/>
    <property type="match status" value="1"/>
</dbReference>
<dbReference type="PROSITE" id="PS51722">
    <property type="entry name" value="G_TR_2"/>
    <property type="match status" value="1"/>
</dbReference>
<name>RF3_PSEE4</name>
<comment type="function">
    <text evidence="1">Increases the formation of ribosomal termination complexes and stimulates activities of RF-1 and RF-2. It binds guanine nucleotides and has strong preference for UGA stop codons. It may interact directly with the ribosome. The stimulation of RF-1 and RF-2 is significantly reduced by GTP and GDP, but not by GMP.</text>
</comment>
<comment type="subcellular location">
    <subcellularLocation>
        <location evidence="1">Cytoplasm</location>
    </subcellularLocation>
</comment>
<comment type="similarity">
    <text evidence="1">Belongs to the TRAFAC class translation factor GTPase superfamily. Classic translation factor GTPase family. PrfC subfamily.</text>
</comment>
<evidence type="ECO:0000255" key="1">
    <source>
        <dbReference type="HAMAP-Rule" id="MF_00072"/>
    </source>
</evidence>
<accession>Q1IEF7</accession>
<keyword id="KW-0963">Cytoplasm</keyword>
<keyword id="KW-0342">GTP-binding</keyword>
<keyword id="KW-0547">Nucleotide-binding</keyword>
<keyword id="KW-0648">Protein biosynthesis</keyword>
<sequence>MTNQAAEVAKRRTFAIISHPDAGKTTITEKLLLMGKAISVAGTVKSRKSDRHATSDWMEMEKQRGISITTSVMQFPYREHMINLLDTPGHEDFSEDTYRTLTAVDSALMVLDGGKGVEPRTIALMDVCRLRDTPIVSFINKLDRDIRDPIELLDEIEAVLKIKAAPITWPIGCYRDFKGVYHLTGDYIIVYTPGHGHERTEAKIIQKLDSDEARAHLGDQYDSFVDQLELVQGACHEFNQDEFINGQLTPVFFGTALGNFGVDHVLDAVVDWAPRPLGRVAHERTVEPVEEKFTGFVFKIQANMDPKHRDRIAFMRICSGKYEKGMKMRHVRLNKDLRIGDALTFFSSEREQLEEAFAGDIIGLHNHGTIQIGDTFTEGEALGFTGIPHFAPELFRRVRLKDPLKSKQLRQGLQQLAEEGATQVFFPERSNDIILGAVGVLQFDVVASRLKEEYKVECAYEPITVWSARWISCDDKKKLEEFQNKAMENLAIDGGGHLTYLAPTRVNLSLMEERWPDIKFRATREHH</sequence>
<proteinExistence type="inferred from homology"/>